<evidence type="ECO:0000250" key="1"/>
<evidence type="ECO:0000250" key="2">
    <source>
        <dbReference type="UniProtKB" id="P27038"/>
    </source>
</evidence>
<evidence type="ECO:0000255" key="3"/>
<evidence type="ECO:0000255" key="4">
    <source>
        <dbReference type="PROSITE-ProRule" id="PRU00159"/>
    </source>
</evidence>
<evidence type="ECO:0000255" key="5">
    <source>
        <dbReference type="PROSITE-ProRule" id="PRU10027"/>
    </source>
</evidence>
<evidence type="ECO:0000269" key="6">
    <source>
    </source>
</evidence>
<evidence type="ECO:0000269" key="7">
    <source>
    </source>
</evidence>
<evidence type="ECO:0000269" key="8">
    <source>
    </source>
</evidence>
<evidence type="ECO:0000269" key="9">
    <source>
    </source>
</evidence>
<evidence type="ECO:0000269" key="10">
    <source>
    </source>
</evidence>
<evidence type="ECO:0000269" key="11">
    <source>
    </source>
</evidence>
<evidence type="ECO:0000269" key="12">
    <source>
    </source>
</evidence>
<evidence type="ECO:0000269" key="13">
    <source>
    </source>
</evidence>
<evidence type="ECO:0000303" key="14">
    <source>
    </source>
</evidence>
<evidence type="ECO:0000305" key="15"/>
<evidence type="ECO:0000305" key="16">
    <source>
    </source>
</evidence>
<evidence type="ECO:0000312" key="17">
    <source>
        <dbReference type="HGNC" id="HGNC:173"/>
    </source>
</evidence>
<evidence type="ECO:0007829" key="18">
    <source>
        <dbReference type="PDB" id="3SOC"/>
    </source>
</evidence>
<evidence type="ECO:0007829" key="19">
    <source>
        <dbReference type="PDB" id="5NH3"/>
    </source>
</evidence>
<evidence type="ECO:0007829" key="20">
    <source>
        <dbReference type="PDB" id="7U5P"/>
    </source>
</evidence>
<dbReference type="EC" id="2.7.11.30" evidence="13"/>
<dbReference type="EMBL" id="X63128">
    <property type="protein sequence ID" value="CAA44839.1"/>
    <property type="molecule type" value="mRNA"/>
</dbReference>
<dbReference type="EMBL" id="M93415">
    <property type="protein sequence ID" value="AAA35504.1"/>
    <property type="molecule type" value="mRNA"/>
</dbReference>
<dbReference type="EMBL" id="X62381">
    <property type="protein sequence ID" value="CAA44245.1"/>
    <property type="molecule type" value="mRNA"/>
</dbReference>
<dbReference type="EMBL" id="D31770">
    <property type="protein sequence ID" value="BAA06548.1"/>
    <property type="molecule type" value="mRNA"/>
</dbReference>
<dbReference type="EMBL" id="AK301629">
    <property type="protein sequence ID" value="BAG63114.1"/>
    <property type="molecule type" value="mRNA"/>
</dbReference>
<dbReference type="EMBL" id="AK314124">
    <property type="protein sequence ID" value="BAG36815.1"/>
    <property type="molecule type" value="mRNA"/>
</dbReference>
<dbReference type="EMBL" id="AC009480">
    <property type="protein sequence ID" value="AAX93050.1"/>
    <property type="molecule type" value="Genomic_DNA"/>
</dbReference>
<dbReference type="EMBL" id="CH471058">
    <property type="protein sequence ID" value="EAX11561.1"/>
    <property type="molecule type" value="Genomic_DNA"/>
</dbReference>
<dbReference type="EMBL" id="CH471058">
    <property type="protein sequence ID" value="EAX11562.1"/>
    <property type="molecule type" value="Genomic_DNA"/>
</dbReference>
<dbReference type="EMBL" id="BC067418">
    <property type="protein sequence ID" value="AAH67418.1"/>
    <property type="molecule type" value="mRNA"/>
</dbReference>
<dbReference type="EMBL" id="BC067417">
    <property type="protein sequence ID" value="AAH67417.1"/>
    <property type="molecule type" value="mRNA"/>
</dbReference>
<dbReference type="EMBL" id="BC069707">
    <property type="protein sequence ID" value="AAH69707.1"/>
    <property type="molecule type" value="mRNA"/>
</dbReference>
<dbReference type="CCDS" id="CCDS33301.1">
    <molecule id="P27037-1"/>
</dbReference>
<dbReference type="CCDS" id="CCDS63030.1">
    <molecule id="P27037-2"/>
</dbReference>
<dbReference type="PIR" id="JQ1486">
    <property type="entry name" value="JQ1486"/>
</dbReference>
<dbReference type="RefSeq" id="NP_001265508.1">
    <molecule id="P27037-1"/>
    <property type="nucleotide sequence ID" value="NM_001278579.2"/>
</dbReference>
<dbReference type="RefSeq" id="NP_001265509.1">
    <molecule id="P27037-2"/>
    <property type="nucleotide sequence ID" value="NM_001278580.2"/>
</dbReference>
<dbReference type="RefSeq" id="NP_001607.1">
    <molecule id="P27037-1"/>
    <property type="nucleotide sequence ID" value="NM_001616.5"/>
</dbReference>
<dbReference type="RefSeq" id="XP_047302248.1">
    <molecule id="P27037-2"/>
    <property type="nucleotide sequence ID" value="XM_047446292.1"/>
</dbReference>
<dbReference type="RefSeq" id="XP_054200482.1">
    <molecule id="P27037-2"/>
    <property type="nucleotide sequence ID" value="XM_054344507.1"/>
</dbReference>
<dbReference type="PDB" id="3Q4T">
    <property type="method" value="X-ray"/>
    <property type="resolution" value="1.96 A"/>
    <property type="chains" value="A/B=191-488"/>
</dbReference>
<dbReference type="PDB" id="3SOC">
    <property type="method" value="X-ray"/>
    <property type="resolution" value="1.95 A"/>
    <property type="chains" value="A/B=191-488"/>
</dbReference>
<dbReference type="PDB" id="4ASX">
    <property type="method" value="X-ray"/>
    <property type="resolution" value="2.05 A"/>
    <property type="chains" value="A/B=191-488"/>
</dbReference>
<dbReference type="PDB" id="5NH3">
    <property type="method" value="X-ray"/>
    <property type="resolution" value="2.35 A"/>
    <property type="chains" value="A/B=20-135"/>
</dbReference>
<dbReference type="PDB" id="7U5P">
    <property type="method" value="X-ray"/>
    <property type="resolution" value="3.14 A"/>
    <property type="chains" value="A/C/E/G=1-121"/>
</dbReference>
<dbReference type="PDBsum" id="3Q4T"/>
<dbReference type="PDBsum" id="3SOC"/>
<dbReference type="PDBsum" id="4ASX"/>
<dbReference type="PDBsum" id="5NH3"/>
<dbReference type="PDBsum" id="7U5P"/>
<dbReference type="SMR" id="P27037"/>
<dbReference type="BioGRID" id="106607">
    <property type="interactions" value="132"/>
</dbReference>
<dbReference type="CORUM" id="P27037"/>
<dbReference type="DIP" id="DIP-520N"/>
<dbReference type="FunCoup" id="P27037">
    <property type="interactions" value="1596"/>
</dbReference>
<dbReference type="IntAct" id="P27037">
    <property type="interactions" value="70"/>
</dbReference>
<dbReference type="MINT" id="P27037"/>
<dbReference type="STRING" id="9606.ENSP00000241416"/>
<dbReference type="BindingDB" id="P27037"/>
<dbReference type="ChEMBL" id="CHEMBL5616"/>
<dbReference type="DrugBank" id="DB12118">
    <property type="generic name" value="Sotatercept"/>
</dbReference>
<dbReference type="DrugCentral" id="P27037"/>
<dbReference type="GuidetoPHARMACOLOGY" id="1791"/>
<dbReference type="GlyCosmos" id="P27037">
    <property type="glycosylation" value="2 sites, No reported glycans"/>
</dbReference>
<dbReference type="GlyGen" id="P27037">
    <property type="glycosylation" value="2 sites, 2 N-linked glycans (2 sites)"/>
</dbReference>
<dbReference type="iPTMnet" id="P27037"/>
<dbReference type="PhosphoSitePlus" id="P27037"/>
<dbReference type="BioMuta" id="ACVR2A"/>
<dbReference type="DMDM" id="114722"/>
<dbReference type="jPOST" id="P27037"/>
<dbReference type="MassIVE" id="P27037"/>
<dbReference type="PaxDb" id="9606-ENSP00000241416"/>
<dbReference type="PeptideAtlas" id="P27037"/>
<dbReference type="ProteomicsDB" id="5369"/>
<dbReference type="ProteomicsDB" id="54373">
    <molecule id="P27037-1"/>
</dbReference>
<dbReference type="ABCD" id="P27037">
    <property type="antibodies" value="1 sequenced antibody"/>
</dbReference>
<dbReference type="Antibodypedia" id="18817">
    <property type="antibodies" value="488 antibodies from 38 providers"/>
</dbReference>
<dbReference type="DNASU" id="92"/>
<dbReference type="Ensembl" id="ENST00000241416.12">
    <molecule id="P27037-1"/>
    <property type="protein sequence ID" value="ENSP00000241416.7"/>
    <property type="gene ID" value="ENSG00000121989.15"/>
</dbReference>
<dbReference type="Ensembl" id="ENST00000404590.1">
    <molecule id="P27037-1"/>
    <property type="protein sequence ID" value="ENSP00000384338.1"/>
    <property type="gene ID" value="ENSG00000121989.15"/>
</dbReference>
<dbReference type="Ensembl" id="ENST00000535787.5">
    <molecule id="P27037-2"/>
    <property type="protein sequence ID" value="ENSP00000439988.1"/>
    <property type="gene ID" value="ENSG00000121989.15"/>
</dbReference>
<dbReference type="GeneID" id="92"/>
<dbReference type="KEGG" id="hsa:92"/>
<dbReference type="MANE-Select" id="ENST00000241416.12">
    <property type="protein sequence ID" value="ENSP00000241416.7"/>
    <property type="RefSeq nucleotide sequence ID" value="NM_001616.5"/>
    <property type="RefSeq protein sequence ID" value="NP_001607.1"/>
</dbReference>
<dbReference type="UCSC" id="uc002twg.5">
    <molecule id="P27037-1"/>
    <property type="organism name" value="human"/>
</dbReference>
<dbReference type="AGR" id="HGNC:173"/>
<dbReference type="CTD" id="92"/>
<dbReference type="DisGeNET" id="92"/>
<dbReference type="GeneCards" id="ACVR2A"/>
<dbReference type="HGNC" id="HGNC:173">
    <property type="gene designation" value="ACVR2A"/>
</dbReference>
<dbReference type="HPA" id="ENSG00000121989">
    <property type="expression patterns" value="Low tissue specificity"/>
</dbReference>
<dbReference type="MalaCards" id="ACVR2A"/>
<dbReference type="MIM" id="102581">
    <property type="type" value="gene"/>
</dbReference>
<dbReference type="neXtProt" id="NX_P27037"/>
<dbReference type="OpenTargets" id="ENSG00000121989"/>
<dbReference type="PharmGKB" id="PA24494"/>
<dbReference type="VEuPathDB" id="HostDB:ENSG00000121989"/>
<dbReference type="eggNOG" id="KOG3653">
    <property type="taxonomic scope" value="Eukaryota"/>
</dbReference>
<dbReference type="GeneTree" id="ENSGT00940000157233"/>
<dbReference type="HOGENOM" id="CLU_000288_8_4_1"/>
<dbReference type="InParanoid" id="P27037"/>
<dbReference type="OMA" id="CNQNFTW"/>
<dbReference type="OrthoDB" id="9513784at2759"/>
<dbReference type="PAN-GO" id="P27037">
    <property type="GO annotations" value="6 GO annotations based on evolutionary models"/>
</dbReference>
<dbReference type="PhylomeDB" id="P27037"/>
<dbReference type="TreeFam" id="TF352876"/>
<dbReference type="BRENDA" id="2.7.10.2">
    <property type="organism ID" value="2681"/>
</dbReference>
<dbReference type="PathwayCommons" id="P27037"/>
<dbReference type="Reactome" id="R-HSA-1181150">
    <property type="pathway name" value="Signaling by NODAL"/>
</dbReference>
<dbReference type="Reactome" id="R-HSA-1433617">
    <property type="pathway name" value="Regulation of signaling by NODAL"/>
</dbReference>
<dbReference type="Reactome" id="R-HSA-1502540">
    <property type="pathway name" value="Signaling by Activin"/>
</dbReference>
<dbReference type="Reactome" id="R-HSA-201451">
    <property type="pathway name" value="Signaling by BMP"/>
</dbReference>
<dbReference type="Reactome" id="R-HSA-9839406">
    <property type="pathway name" value="TGFBR3 regulates activin signaling"/>
</dbReference>
<dbReference type="SignaLink" id="P27037"/>
<dbReference type="SIGNOR" id="P27037"/>
<dbReference type="BioGRID-ORCS" id="92">
    <property type="hits" value="40 hits in 1181 CRISPR screens"/>
</dbReference>
<dbReference type="ChiTaRS" id="ACVR2A">
    <property type="organism name" value="human"/>
</dbReference>
<dbReference type="EvolutionaryTrace" id="P27037"/>
<dbReference type="GeneWiki" id="ACVR2A"/>
<dbReference type="GenomeRNAi" id="92"/>
<dbReference type="Pharos" id="P27037">
    <property type="development level" value="Tchem"/>
</dbReference>
<dbReference type="PRO" id="PR:P27037"/>
<dbReference type="Proteomes" id="UP000005640">
    <property type="component" value="Chromosome 2"/>
</dbReference>
<dbReference type="RNAct" id="P27037">
    <property type="molecule type" value="protein"/>
</dbReference>
<dbReference type="Bgee" id="ENSG00000121989">
    <property type="expression patterns" value="Expressed in buccal mucosa cell and 202 other cell types or tissues"/>
</dbReference>
<dbReference type="GO" id="GO:0048179">
    <property type="term" value="C:activin receptor complex"/>
    <property type="evidence" value="ECO:0000318"/>
    <property type="project" value="GO_Central"/>
</dbReference>
<dbReference type="GO" id="GO:0009986">
    <property type="term" value="C:cell surface"/>
    <property type="evidence" value="ECO:0007669"/>
    <property type="project" value="Ensembl"/>
</dbReference>
<dbReference type="GO" id="GO:0005737">
    <property type="term" value="C:cytoplasm"/>
    <property type="evidence" value="ECO:0000314"/>
    <property type="project" value="HGNC-UCL"/>
</dbReference>
<dbReference type="GO" id="GO:0034673">
    <property type="term" value="C:inhibin-betaglycan-ActRII complex"/>
    <property type="evidence" value="ECO:0000314"/>
    <property type="project" value="BHF-UCL"/>
</dbReference>
<dbReference type="GO" id="GO:0005886">
    <property type="term" value="C:plasma membrane"/>
    <property type="evidence" value="ECO:0000250"/>
    <property type="project" value="UniProt"/>
</dbReference>
<dbReference type="GO" id="GO:0043235">
    <property type="term" value="C:receptor complex"/>
    <property type="evidence" value="ECO:0000353"/>
    <property type="project" value="BHF-UCL"/>
</dbReference>
<dbReference type="GO" id="GO:0048185">
    <property type="term" value="F:activin binding"/>
    <property type="evidence" value="ECO:0007669"/>
    <property type="project" value="Ensembl"/>
</dbReference>
<dbReference type="GO" id="GO:0017002">
    <property type="term" value="F:activin receptor activity"/>
    <property type="evidence" value="ECO:0000314"/>
    <property type="project" value="UniProtKB"/>
</dbReference>
<dbReference type="GO" id="GO:0016361">
    <property type="term" value="F:activin receptor activity, type I"/>
    <property type="evidence" value="ECO:0000314"/>
    <property type="project" value="UniProt"/>
</dbReference>
<dbReference type="GO" id="GO:0016362">
    <property type="term" value="F:activin receptor activity, type II"/>
    <property type="evidence" value="ECO:0000314"/>
    <property type="project" value="UniProt"/>
</dbReference>
<dbReference type="GO" id="GO:0005524">
    <property type="term" value="F:ATP binding"/>
    <property type="evidence" value="ECO:0007669"/>
    <property type="project" value="UniProtKB-KW"/>
</dbReference>
<dbReference type="GO" id="GO:0098821">
    <property type="term" value="F:BMP receptor activity"/>
    <property type="evidence" value="ECO:0000250"/>
    <property type="project" value="UniProtKB"/>
</dbReference>
<dbReference type="GO" id="GO:0015026">
    <property type="term" value="F:coreceptor activity"/>
    <property type="evidence" value="ECO:0000314"/>
    <property type="project" value="BHF-UCL"/>
</dbReference>
<dbReference type="GO" id="GO:0019838">
    <property type="term" value="F:growth factor binding"/>
    <property type="evidence" value="ECO:0007669"/>
    <property type="project" value="Ensembl"/>
</dbReference>
<dbReference type="GO" id="GO:0042802">
    <property type="term" value="F:identical protein binding"/>
    <property type="evidence" value="ECO:0007669"/>
    <property type="project" value="Ensembl"/>
</dbReference>
<dbReference type="GO" id="GO:0034711">
    <property type="term" value="F:inhibin binding"/>
    <property type="evidence" value="ECO:0007669"/>
    <property type="project" value="Ensembl"/>
</dbReference>
<dbReference type="GO" id="GO:0046872">
    <property type="term" value="F:metal ion binding"/>
    <property type="evidence" value="ECO:0007669"/>
    <property type="project" value="UniProtKB-KW"/>
</dbReference>
<dbReference type="GO" id="GO:0030165">
    <property type="term" value="F:PDZ domain binding"/>
    <property type="evidence" value="ECO:0007669"/>
    <property type="project" value="Ensembl"/>
</dbReference>
<dbReference type="GO" id="GO:0004674">
    <property type="term" value="F:protein serine/threonine kinase activity"/>
    <property type="evidence" value="ECO:0000269"/>
    <property type="project" value="Reactome"/>
</dbReference>
<dbReference type="GO" id="GO:0004675">
    <property type="term" value="F:transmembrane receptor protein serine/threonine kinase activity"/>
    <property type="evidence" value="ECO:0000304"/>
    <property type="project" value="ProtInc"/>
</dbReference>
<dbReference type="GO" id="GO:0032924">
    <property type="term" value="P:activin receptor signaling pathway"/>
    <property type="evidence" value="ECO:0000315"/>
    <property type="project" value="BHF-UCL"/>
</dbReference>
<dbReference type="GO" id="GO:0009952">
    <property type="term" value="P:anterior/posterior pattern specification"/>
    <property type="evidence" value="ECO:0007669"/>
    <property type="project" value="Ensembl"/>
</dbReference>
<dbReference type="GO" id="GO:0030509">
    <property type="term" value="P:BMP signaling pathway"/>
    <property type="evidence" value="ECO:0000314"/>
    <property type="project" value="BHF-UCL"/>
</dbReference>
<dbReference type="GO" id="GO:0007178">
    <property type="term" value="P:cell surface receptor protein serine/threonine kinase signaling pathway"/>
    <property type="evidence" value="ECO:0000304"/>
    <property type="project" value="ProtInc"/>
</dbReference>
<dbReference type="GO" id="GO:0071773">
    <property type="term" value="P:cellular response to BMP stimulus"/>
    <property type="evidence" value="ECO:0000315"/>
    <property type="project" value="BHF-UCL"/>
</dbReference>
<dbReference type="GO" id="GO:0071363">
    <property type="term" value="P:cellular response to growth factor stimulus"/>
    <property type="evidence" value="ECO:0000318"/>
    <property type="project" value="GO_Central"/>
</dbReference>
<dbReference type="GO" id="GO:0007368">
    <property type="term" value="P:determination of left/right symmetry"/>
    <property type="evidence" value="ECO:0007669"/>
    <property type="project" value="Ensembl"/>
</dbReference>
<dbReference type="GO" id="GO:0048706">
    <property type="term" value="P:embryonic skeletal system development"/>
    <property type="evidence" value="ECO:0007669"/>
    <property type="project" value="Ensembl"/>
</dbReference>
<dbReference type="GO" id="GO:0001702">
    <property type="term" value="P:gastrulation with mouth forming second"/>
    <property type="evidence" value="ECO:0007669"/>
    <property type="project" value="Ensembl"/>
</dbReference>
<dbReference type="GO" id="GO:0007498">
    <property type="term" value="P:mesoderm development"/>
    <property type="evidence" value="ECO:0007669"/>
    <property type="project" value="Ensembl"/>
</dbReference>
<dbReference type="GO" id="GO:0042475">
    <property type="term" value="P:odontogenesis of dentin-containing tooth"/>
    <property type="evidence" value="ECO:0007669"/>
    <property type="project" value="Ensembl"/>
</dbReference>
<dbReference type="GO" id="GO:0001649">
    <property type="term" value="P:osteoblast differentiation"/>
    <property type="evidence" value="ECO:0000314"/>
    <property type="project" value="UniProt"/>
</dbReference>
<dbReference type="GO" id="GO:0007389">
    <property type="term" value="P:pattern specification process"/>
    <property type="evidence" value="ECO:0000318"/>
    <property type="project" value="GO_Central"/>
</dbReference>
<dbReference type="GO" id="GO:0043084">
    <property type="term" value="P:penile erection"/>
    <property type="evidence" value="ECO:0007669"/>
    <property type="project" value="Ensembl"/>
</dbReference>
<dbReference type="GO" id="GO:0032927">
    <property type="term" value="P:positive regulation of activin receptor signaling pathway"/>
    <property type="evidence" value="ECO:0000314"/>
    <property type="project" value="HGNC-UCL"/>
</dbReference>
<dbReference type="GO" id="GO:0030501">
    <property type="term" value="P:positive regulation of bone mineralization"/>
    <property type="evidence" value="ECO:0000315"/>
    <property type="project" value="BHF-UCL"/>
</dbReference>
<dbReference type="GO" id="GO:0045648">
    <property type="term" value="P:positive regulation of erythrocyte differentiation"/>
    <property type="evidence" value="ECO:0000314"/>
    <property type="project" value="HGNC-UCL"/>
</dbReference>
<dbReference type="GO" id="GO:0045669">
    <property type="term" value="P:positive regulation of osteoblast differentiation"/>
    <property type="evidence" value="ECO:0000315"/>
    <property type="project" value="BHF-UCL"/>
</dbReference>
<dbReference type="GO" id="GO:0001934">
    <property type="term" value="P:positive regulation of protein phosphorylation"/>
    <property type="evidence" value="ECO:0000315"/>
    <property type="project" value="MGI"/>
</dbReference>
<dbReference type="GO" id="GO:0060391">
    <property type="term" value="P:positive regulation of SMAD protein signal transduction"/>
    <property type="evidence" value="ECO:0000315"/>
    <property type="project" value="BHF-UCL"/>
</dbReference>
<dbReference type="GO" id="GO:0045944">
    <property type="term" value="P:positive regulation of transcription by RNA polymerase II"/>
    <property type="evidence" value="ECO:0000315"/>
    <property type="project" value="BHF-UCL"/>
</dbReference>
<dbReference type="GO" id="GO:0045428">
    <property type="term" value="P:regulation of nitric oxide biosynthetic process"/>
    <property type="evidence" value="ECO:0007669"/>
    <property type="project" value="Ensembl"/>
</dbReference>
<dbReference type="GO" id="GO:0060011">
    <property type="term" value="P:Sertoli cell proliferation"/>
    <property type="evidence" value="ECO:0007669"/>
    <property type="project" value="Ensembl"/>
</dbReference>
<dbReference type="GO" id="GO:0042713">
    <property type="term" value="P:sperm ejaculation"/>
    <property type="evidence" value="ECO:0007669"/>
    <property type="project" value="Ensembl"/>
</dbReference>
<dbReference type="GO" id="GO:0007283">
    <property type="term" value="P:spermatogenesis"/>
    <property type="evidence" value="ECO:0007669"/>
    <property type="project" value="Ensembl"/>
</dbReference>
<dbReference type="CDD" id="cd14141">
    <property type="entry name" value="STKc_ACVR2a"/>
    <property type="match status" value="1"/>
</dbReference>
<dbReference type="CDD" id="cd23631">
    <property type="entry name" value="TFP_LU_ECD_ACVR2A"/>
    <property type="match status" value="1"/>
</dbReference>
<dbReference type="FunFam" id="1.10.510.10:FF:000099">
    <property type="entry name" value="Serine/threonine-protein kinase receptor"/>
    <property type="match status" value="1"/>
</dbReference>
<dbReference type="FunFam" id="2.10.60.10:FF:000002">
    <property type="entry name" value="Serine/threonine-protein kinase receptor"/>
    <property type="match status" value="1"/>
</dbReference>
<dbReference type="FunFam" id="3.30.200.20:FF:000094">
    <property type="entry name" value="Serine/threonine-protein kinase receptor"/>
    <property type="match status" value="1"/>
</dbReference>
<dbReference type="Gene3D" id="2.10.60.10">
    <property type="entry name" value="CD59"/>
    <property type="match status" value="1"/>
</dbReference>
<dbReference type="Gene3D" id="3.30.200.20">
    <property type="entry name" value="Phosphorylase Kinase, domain 1"/>
    <property type="match status" value="1"/>
</dbReference>
<dbReference type="Gene3D" id="1.10.510.10">
    <property type="entry name" value="Transferase(Phosphotransferase) domain 1"/>
    <property type="match status" value="1"/>
</dbReference>
<dbReference type="InterPro" id="IPR000472">
    <property type="entry name" value="Activin_recp"/>
</dbReference>
<dbReference type="InterPro" id="IPR011009">
    <property type="entry name" value="Kinase-like_dom_sf"/>
</dbReference>
<dbReference type="InterPro" id="IPR000719">
    <property type="entry name" value="Prot_kinase_dom"/>
</dbReference>
<dbReference type="InterPro" id="IPR008271">
    <property type="entry name" value="Ser/Thr_kinase_AS"/>
</dbReference>
<dbReference type="InterPro" id="IPR045860">
    <property type="entry name" value="Snake_toxin-like_sf"/>
</dbReference>
<dbReference type="InterPro" id="IPR000333">
    <property type="entry name" value="TGFB_receptor"/>
</dbReference>
<dbReference type="PANTHER" id="PTHR23255:SF64">
    <property type="entry name" value="ACTIVIN RECEPTOR TYPE-2A"/>
    <property type="match status" value="1"/>
</dbReference>
<dbReference type="PANTHER" id="PTHR23255">
    <property type="entry name" value="TRANSFORMING GROWTH FACTOR-BETA RECEPTOR TYPE I AND II"/>
    <property type="match status" value="1"/>
</dbReference>
<dbReference type="Pfam" id="PF01064">
    <property type="entry name" value="Activin_recp"/>
    <property type="match status" value="1"/>
</dbReference>
<dbReference type="Pfam" id="PF00069">
    <property type="entry name" value="Pkinase"/>
    <property type="match status" value="1"/>
</dbReference>
<dbReference type="PRINTS" id="PR00653">
    <property type="entry name" value="ACTIVIN2R"/>
</dbReference>
<dbReference type="SMART" id="SM00220">
    <property type="entry name" value="S_TKc"/>
    <property type="match status" value="1"/>
</dbReference>
<dbReference type="SUPFAM" id="SSF56112">
    <property type="entry name" value="Protein kinase-like (PK-like)"/>
    <property type="match status" value="1"/>
</dbReference>
<dbReference type="SUPFAM" id="SSF57302">
    <property type="entry name" value="Snake toxin-like"/>
    <property type="match status" value="1"/>
</dbReference>
<dbReference type="PROSITE" id="PS50011">
    <property type="entry name" value="PROTEIN_KINASE_DOM"/>
    <property type="match status" value="1"/>
</dbReference>
<dbReference type="PROSITE" id="PS00108">
    <property type="entry name" value="PROTEIN_KINASE_ST"/>
    <property type="match status" value="1"/>
</dbReference>
<accession>P27037</accession>
<accession>B2RAB8</accession>
<accession>B4DWQ2</accession>
<accession>D3DP85</accession>
<accession>Q53TH4</accession>
<accession>Q6NWV2</accession>
<accession>Q92474</accession>
<protein>
    <recommendedName>
        <fullName evidence="16">Activin receptor type-2A</fullName>
        <ecNumber evidence="13">2.7.11.30</ecNumber>
    </recommendedName>
    <alternativeName>
        <fullName>Activin receptor type IIA</fullName>
        <shortName>ACTR-IIA</shortName>
        <shortName>ACTRIIA</shortName>
    </alternativeName>
</protein>
<reference key="1">
    <citation type="journal article" date="1992" name="Biochim. Biophys. Acta">
        <title>Cloning of the human activin receptor cDNA reveals high evolutionary conservation.</title>
        <authorList>
            <person name="Matzuk M.M."/>
            <person name="Bradley A."/>
        </authorList>
    </citation>
    <scope>NUCLEOTIDE SEQUENCE [MRNA] (ISOFORM 1)</scope>
    <source>
        <tissue>Testis</tissue>
    </source>
</reference>
<reference key="2">
    <citation type="journal article" date="1992" name="Biochem. Biophys. Res. Commun.">
        <title>Molecular cloning and binding properties of the human type II activin receptor.</title>
        <authorList>
            <person name="Donaldson C.J."/>
            <person name="Mathews L.S."/>
            <person name="Vale W.W."/>
        </authorList>
    </citation>
    <scope>NUCLEOTIDE SEQUENCE [MRNA] (ISOFORM 1)</scope>
    <scope>FUNCTION</scope>
    <source>
        <tissue>Testis</tissue>
    </source>
</reference>
<reference key="3">
    <citation type="submission" date="1991-12" db="EMBL/GenBank/DDBJ databases">
        <authorList>
            <person name="Geiser A.G."/>
        </authorList>
    </citation>
    <scope>NUCLEOTIDE SEQUENCE [MRNA] (ISOFORM 1)</scope>
    <source>
        <tissue>Mammary gland</tissue>
    </source>
</reference>
<reference key="4">
    <citation type="submission" date="1994-11" db="EMBL/GenBank/DDBJ databases">
        <authorList>
            <person name="Iimura T."/>
            <person name="Oida S."/>
        </authorList>
    </citation>
    <scope>NUCLEOTIDE SEQUENCE [MRNA] (ISOFORM 1)</scope>
</reference>
<reference key="5">
    <citation type="journal article" date="2004" name="Nat. Genet.">
        <title>Complete sequencing and characterization of 21,243 full-length human cDNAs.</title>
        <authorList>
            <person name="Ota T."/>
            <person name="Suzuki Y."/>
            <person name="Nishikawa T."/>
            <person name="Otsuki T."/>
            <person name="Sugiyama T."/>
            <person name="Irie R."/>
            <person name="Wakamatsu A."/>
            <person name="Hayashi K."/>
            <person name="Sato H."/>
            <person name="Nagai K."/>
            <person name="Kimura K."/>
            <person name="Makita H."/>
            <person name="Sekine M."/>
            <person name="Obayashi M."/>
            <person name="Nishi T."/>
            <person name="Shibahara T."/>
            <person name="Tanaka T."/>
            <person name="Ishii S."/>
            <person name="Yamamoto J."/>
            <person name="Saito K."/>
            <person name="Kawai Y."/>
            <person name="Isono Y."/>
            <person name="Nakamura Y."/>
            <person name="Nagahari K."/>
            <person name="Murakami K."/>
            <person name="Yasuda T."/>
            <person name="Iwayanagi T."/>
            <person name="Wagatsuma M."/>
            <person name="Shiratori A."/>
            <person name="Sudo H."/>
            <person name="Hosoiri T."/>
            <person name="Kaku Y."/>
            <person name="Kodaira H."/>
            <person name="Kondo H."/>
            <person name="Sugawara M."/>
            <person name="Takahashi M."/>
            <person name="Kanda K."/>
            <person name="Yokoi T."/>
            <person name="Furuya T."/>
            <person name="Kikkawa E."/>
            <person name="Omura Y."/>
            <person name="Abe K."/>
            <person name="Kamihara K."/>
            <person name="Katsuta N."/>
            <person name="Sato K."/>
            <person name="Tanikawa M."/>
            <person name="Yamazaki M."/>
            <person name="Ninomiya K."/>
            <person name="Ishibashi T."/>
            <person name="Yamashita H."/>
            <person name="Murakawa K."/>
            <person name="Fujimori K."/>
            <person name="Tanai H."/>
            <person name="Kimata M."/>
            <person name="Watanabe M."/>
            <person name="Hiraoka S."/>
            <person name="Chiba Y."/>
            <person name="Ishida S."/>
            <person name="Ono Y."/>
            <person name="Takiguchi S."/>
            <person name="Watanabe S."/>
            <person name="Yosida M."/>
            <person name="Hotuta T."/>
            <person name="Kusano J."/>
            <person name="Kanehori K."/>
            <person name="Takahashi-Fujii A."/>
            <person name="Hara H."/>
            <person name="Tanase T.-O."/>
            <person name="Nomura Y."/>
            <person name="Togiya S."/>
            <person name="Komai F."/>
            <person name="Hara R."/>
            <person name="Takeuchi K."/>
            <person name="Arita M."/>
            <person name="Imose N."/>
            <person name="Musashino K."/>
            <person name="Yuuki H."/>
            <person name="Oshima A."/>
            <person name="Sasaki N."/>
            <person name="Aotsuka S."/>
            <person name="Yoshikawa Y."/>
            <person name="Matsunawa H."/>
            <person name="Ichihara T."/>
            <person name="Shiohata N."/>
            <person name="Sano S."/>
            <person name="Moriya S."/>
            <person name="Momiyama H."/>
            <person name="Satoh N."/>
            <person name="Takami S."/>
            <person name="Terashima Y."/>
            <person name="Suzuki O."/>
            <person name="Nakagawa S."/>
            <person name="Senoh A."/>
            <person name="Mizoguchi H."/>
            <person name="Goto Y."/>
            <person name="Shimizu F."/>
            <person name="Wakebe H."/>
            <person name="Hishigaki H."/>
            <person name="Watanabe T."/>
            <person name="Sugiyama A."/>
            <person name="Takemoto M."/>
            <person name="Kawakami B."/>
            <person name="Yamazaki M."/>
            <person name="Watanabe K."/>
            <person name="Kumagai A."/>
            <person name="Itakura S."/>
            <person name="Fukuzumi Y."/>
            <person name="Fujimori Y."/>
            <person name="Komiyama M."/>
            <person name="Tashiro H."/>
            <person name="Tanigami A."/>
            <person name="Fujiwara T."/>
            <person name="Ono T."/>
            <person name="Yamada K."/>
            <person name="Fujii Y."/>
            <person name="Ozaki K."/>
            <person name="Hirao M."/>
            <person name="Ohmori Y."/>
            <person name="Kawabata A."/>
            <person name="Hikiji T."/>
            <person name="Kobatake N."/>
            <person name="Inagaki H."/>
            <person name="Ikema Y."/>
            <person name="Okamoto S."/>
            <person name="Okitani R."/>
            <person name="Kawakami T."/>
            <person name="Noguchi S."/>
            <person name="Itoh T."/>
            <person name="Shigeta K."/>
            <person name="Senba T."/>
            <person name="Matsumura K."/>
            <person name="Nakajima Y."/>
            <person name="Mizuno T."/>
            <person name="Morinaga M."/>
            <person name="Sasaki M."/>
            <person name="Togashi T."/>
            <person name="Oyama M."/>
            <person name="Hata H."/>
            <person name="Watanabe M."/>
            <person name="Komatsu T."/>
            <person name="Mizushima-Sugano J."/>
            <person name="Satoh T."/>
            <person name="Shirai Y."/>
            <person name="Takahashi Y."/>
            <person name="Nakagawa K."/>
            <person name="Okumura K."/>
            <person name="Nagase T."/>
            <person name="Nomura N."/>
            <person name="Kikuchi H."/>
            <person name="Masuho Y."/>
            <person name="Yamashita R."/>
            <person name="Nakai K."/>
            <person name="Yada T."/>
            <person name="Nakamura Y."/>
            <person name="Ohara O."/>
            <person name="Isogai T."/>
            <person name="Sugano S."/>
        </authorList>
    </citation>
    <scope>NUCLEOTIDE SEQUENCE [LARGE SCALE MRNA] (ISOFORMS 1 AND 2)</scope>
    <source>
        <tissue>Colon</tissue>
        <tissue>Hippocampus</tissue>
    </source>
</reference>
<reference key="6">
    <citation type="journal article" date="2005" name="Nature">
        <title>Generation and annotation of the DNA sequences of human chromosomes 2 and 4.</title>
        <authorList>
            <person name="Hillier L.W."/>
            <person name="Graves T.A."/>
            <person name="Fulton R.S."/>
            <person name="Fulton L.A."/>
            <person name="Pepin K.H."/>
            <person name="Minx P."/>
            <person name="Wagner-McPherson C."/>
            <person name="Layman D."/>
            <person name="Wylie K."/>
            <person name="Sekhon M."/>
            <person name="Becker M.C."/>
            <person name="Fewell G.A."/>
            <person name="Delehaunty K.D."/>
            <person name="Miner T.L."/>
            <person name="Nash W.E."/>
            <person name="Kremitzki C."/>
            <person name="Oddy L."/>
            <person name="Du H."/>
            <person name="Sun H."/>
            <person name="Bradshaw-Cordum H."/>
            <person name="Ali J."/>
            <person name="Carter J."/>
            <person name="Cordes M."/>
            <person name="Harris A."/>
            <person name="Isak A."/>
            <person name="van Brunt A."/>
            <person name="Nguyen C."/>
            <person name="Du F."/>
            <person name="Courtney L."/>
            <person name="Kalicki J."/>
            <person name="Ozersky P."/>
            <person name="Abbott S."/>
            <person name="Armstrong J."/>
            <person name="Belter E.A."/>
            <person name="Caruso L."/>
            <person name="Cedroni M."/>
            <person name="Cotton M."/>
            <person name="Davidson T."/>
            <person name="Desai A."/>
            <person name="Elliott G."/>
            <person name="Erb T."/>
            <person name="Fronick C."/>
            <person name="Gaige T."/>
            <person name="Haakenson W."/>
            <person name="Haglund K."/>
            <person name="Holmes A."/>
            <person name="Harkins R."/>
            <person name="Kim K."/>
            <person name="Kruchowski S.S."/>
            <person name="Strong C.M."/>
            <person name="Grewal N."/>
            <person name="Goyea E."/>
            <person name="Hou S."/>
            <person name="Levy A."/>
            <person name="Martinka S."/>
            <person name="Mead K."/>
            <person name="McLellan M.D."/>
            <person name="Meyer R."/>
            <person name="Randall-Maher J."/>
            <person name="Tomlinson C."/>
            <person name="Dauphin-Kohlberg S."/>
            <person name="Kozlowicz-Reilly A."/>
            <person name="Shah N."/>
            <person name="Swearengen-Shahid S."/>
            <person name="Snider J."/>
            <person name="Strong J.T."/>
            <person name="Thompson J."/>
            <person name="Yoakum M."/>
            <person name="Leonard S."/>
            <person name="Pearman C."/>
            <person name="Trani L."/>
            <person name="Radionenko M."/>
            <person name="Waligorski J.E."/>
            <person name="Wang C."/>
            <person name="Rock S.M."/>
            <person name="Tin-Wollam A.-M."/>
            <person name="Maupin R."/>
            <person name="Latreille P."/>
            <person name="Wendl M.C."/>
            <person name="Yang S.-P."/>
            <person name="Pohl C."/>
            <person name="Wallis J.W."/>
            <person name="Spieth J."/>
            <person name="Bieri T.A."/>
            <person name="Berkowicz N."/>
            <person name="Nelson J.O."/>
            <person name="Osborne J."/>
            <person name="Ding L."/>
            <person name="Meyer R."/>
            <person name="Sabo A."/>
            <person name="Shotland Y."/>
            <person name="Sinha P."/>
            <person name="Wohldmann P.E."/>
            <person name="Cook L.L."/>
            <person name="Hickenbotham M.T."/>
            <person name="Eldred J."/>
            <person name="Williams D."/>
            <person name="Jones T.A."/>
            <person name="She X."/>
            <person name="Ciccarelli F.D."/>
            <person name="Izaurralde E."/>
            <person name="Taylor J."/>
            <person name="Schmutz J."/>
            <person name="Myers R.M."/>
            <person name="Cox D.R."/>
            <person name="Huang X."/>
            <person name="McPherson J.D."/>
            <person name="Mardis E.R."/>
            <person name="Clifton S.W."/>
            <person name="Warren W.C."/>
            <person name="Chinwalla A.T."/>
            <person name="Eddy S.R."/>
            <person name="Marra M.A."/>
            <person name="Ovcharenko I."/>
            <person name="Furey T.S."/>
            <person name="Miller W."/>
            <person name="Eichler E.E."/>
            <person name="Bork P."/>
            <person name="Suyama M."/>
            <person name="Torrents D."/>
            <person name="Waterston R.H."/>
            <person name="Wilson R.K."/>
        </authorList>
    </citation>
    <scope>NUCLEOTIDE SEQUENCE [LARGE SCALE GENOMIC DNA]</scope>
</reference>
<reference key="7">
    <citation type="submission" date="2005-09" db="EMBL/GenBank/DDBJ databases">
        <authorList>
            <person name="Mural R.J."/>
            <person name="Istrail S."/>
            <person name="Sutton G.G."/>
            <person name="Florea L."/>
            <person name="Halpern A.L."/>
            <person name="Mobarry C.M."/>
            <person name="Lippert R."/>
            <person name="Walenz B."/>
            <person name="Shatkay H."/>
            <person name="Dew I."/>
            <person name="Miller J.R."/>
            <person name="Flanigan M.J."/>
            <person name="Edwards N.J."/>
            <person name="Bolanos R."/>
            <person name="Fasulo D."/>
            <person name="Halldorsson B.V."/>
            <person name="Hannenhalli S."/>
            <person name="Turner R."/>
            <person name="Yooseph S."/>
            <person name="Lu F."/>
            <person name="Nusskern D.R."/>
            <person name="Shue B.C."/>
            <person name="Zheng X.H."/>
            <person name="Zhong F."/>
            <person name="Delcher A.L."/>
            <person name="Huson D.H."/>
            <person name="Kravitz S.A."/>
            <person name="Mouchard L."/>
            <person name="Reinert K."/>
            <person name="Remington K.A."/>
            <person name="Clark A.G."/>
            <person name="Waterman M.S."/>
            <person name="Eichler E.E."/>
            <person name="Adams M.D."/>
            <person name="Hunkapiller M.W."/>
            <person name="Myers E.W."/>
            <person name="Venter J.C."/>
        </authorList>
    </citation>
    <scope>NUCLEOTIDE SEQUENCE [LARGE SCALE GENOMIC DNA]</scope>
</reference>
<reference key="8">
    <citation type="journal article" date="2004" name="Genome Res.">
        <title>The status, quality, and expansion of the NIH full-length cDNA project: the Mammalian Gene Collection (MGC).</title>
        <authorList>
            <consortium name="The MGC Project Team"/>
        </authorList>
    </citation>
    <scope>NUCLEOTIDE SEQUENCE [LARGE SCALE MRNA] (ISOFORM 1)</scope>
</reference>
<reference key="9">
    <citation type="journal article" date="2000" name="J. Biol. Chem.">
        <title>Identification of a binding site on the type II activin receptor for activin and inhibin.</title>
        <authorList>
            <person name="Gray P.C."/>
            <person name="Greenwald J."/>
            <person name="Blount A.L."/>
            <person name="Kunitake K.S."/>
            <person name="Donaldson C.J."/>
            <person name="Choe S."/>
            <person name="Vale W."/>
        </authorList>
    </citation>
    <scope>FUNCTION</scope>
    <scope>INTERACTION WITH ACTIVIN A/INHBA</scope>
</reference>
<reference key="10">
    <citation type="journal article" date="2003" name="Mol. Cell">
        <title>The BMP7/ActRII extracellular domain complex provides new insights into the cooperative nature of receptor assembly.</title>
        <authorList>
            <person name="Greenwald J."/>
            <person name="Groppe J."/>
            <person name="Gray P."/>
            <person name="Wiater E."/>
            <person name="Kwiatkowski W."/>
            <person name="Vale W."/>
            <person name="Choe S."/>
        </authorList>
    </citation>
    <scope>INTERACTION WITH BMP7</scope>
</reference>
<reference key="11">
    <citation type="journal article" date="2007" name="J. Endocrinol.">
        <title>Activin receptor-like kinase-2 inhibits activin signaling by blocking the binding of activin to its type II receptor.</title>
        <authorList>
            <person name="Renlund N."/>
            <person name="O'Neill F.H."/>
            <person name="Zhang L."/>
            <person name="Sidis Y."/>
            <person name="Teixeira J."/>
        </authorList>
    </citation>
    <scope>FUNCTION</scope>
    <scope>INTERACTION WITH ACVR1</scope>
</reference>
<reference key="12">
    <citation type="journal article" date="2011" name="Mol. Cell. Biol.">
        <title>TSC-22 promotes transforming growth factor beta-mediated cardiac myofibroblast differentiation by antagonizing Smad7 activity.</title>
        <authorList>
            <person name="Yan X."/>
            <person name="Zhang J."/>
            <person name="Pan L."/>
            <person name="Wang P."/>
            <person name="Xue H."/>
            <person name="Zhang L."/>
            <person name="Gao X."/>
            <person name="Zhao X."/>
            <person name="Ning Y."/>
            <person name="Chen Y.G."/>
        </authorList>
    </citation>
    <scope>INTERACTION WITH TSC22D1</scope>
</reference>
<reference key="13">
    <citation type="journal article" date="2015" name="J. Biol. Chem.">
        <title>Small molecules dorsomorphin and LDN-193189 inhibit myostatin/GDF8 signaling and promote functional myoblast differentiation.</title>
        <authorList>
            <person name="Horbelt D."/>
            <person name="Boergermann J.H."/>
            <person name="Chaikuad A."/>
            <person name="Alfano I."/>
            <person name="Williams E."/>
            <person name="Lukonin I."/>
            <person name="Timmel T."/>
            <person name="Bullock A.N."/>
            <person name="Knaus P."/>
        </authorList>
    </citation>
    <scope>CATALYTIC ACTIVITY</scope>
</reference>
<reference key="14">
    <citation type="submission" date="2011-02" db="PDB data bank">
        <title>Crystal structure of activin receptor type-IIa (ACVR2A) kinase domain in complex with dorsomorphin.</title>
        <authorList>
            <consortium name="Structural genomics consortium (SGC)"/>
        </authorList>
    </citation>
    <scope>X-RAY CRYSTALLOGRAPHY (1.96 ANGSTROMS) OF 191-488 IN COMPLEX WITH DORSOMORPHIN</scope>
</reference>
<reference key="15">
    <citation type="journal article" date="2007" name="Nature">
        <title>Patterns of somatic mutation in human cancer genomes.</title>
        <authorList>
            <person name="Greenman C."/>
            <person name="Stephens P."/>
            <person name="Smith R."/>
            <person name="Dalgliesh G.L."/>
            <person name="Hunter C."/>
            <person name="Bignell G."/>
            <person name="Davies H."/>
            <person name="Teague J."/>
            <person name="Butler A."/>
            <person name="Stevens C."/>
            <person name="Edkins S."/>
            <person name="O'Meara S."/>
            <person name="Vastrik I."/>
            <person name="Schmidt E.E."/>
            <person name="Avis T."/>
            <person name="Barthorpe S."/>
            <person name="Bhamra G."/>
            <person name="Buck G."/>
            <person name="Choudhury B."/>
            <person name="Clements J."/>
            <person name="Cole J."/>
            <person name="Dicks E."/>
            <person name="Forbes S."/>
            <person name="Gray K."/>
            <person name="Halliday K."/>
            <person name="Harrison R."/>
            <person name="Hills K."/>
            <person name="Hinton J."/>
            <person name="Jenkinson A."/>
            <person name="Jones D."/>
            <person name="Menzies A."/>
            <person name="Mironenko T."/>
            <person name="Perry J."/>
            <person name="Raine K."/>
            <person name="Richardson D."/>
            <person name="Shepherd R."/>
            <person name="Small A."/>
            <person name="Tofts C."/>
            <person name="Varian J."/>
            <person name="Webb T."/>
            <person name="West S."/>
            <person name="Widaa S."/>
            <person name="Yates A."/>
            <person name="Cahill D.P."/>
            <person name="Louis D.N."/>
            <person name="Goldstraw P."/>
            <person name="Nicholson A.G."/>
            <person name="Brasseur F."/>
            <person name="Looijenga L."/>
            <person name="Weber B.L."/>
            <person name="Chiew Y.-E."/>
            <person name="DeFazio A."/>
            <person name="Greaves M.F."/>
            <person name="Green A.R."/>
            <person name="Campbell P."/>
            <person name="Birney E."/>
            <person name="Easton D.F."/>
            <person name="Chenevix-Trench G."/>
            <person name="Tan M.-H."/>
            <person name="Khoo S.K."/>
            <person name="Teh B.T."/>
            <person name="Yuen S.T."/>
            <person name="Leung S.Y."/>
            <person name="Wooster R."/>
            <person name="Futreal P.A."/>
            <person name="Stratton M.R."/>
        </authorList>
    </citation>
    <scope>VARIANTS ARG-258 AND ASN-306</scope>
</reference>
<reference key="16">
    <citation type="journal article" date="2011" name="Nature">
        <title>Exome sequencing identifies frequent mutation of the SWI/SNF complex gene PBRM1 in renal carcinoma.</title>
        <authorList>
            <person name="Varela I."/>
            <person name="Tarpey P."/>
            <person name="Raine K."/>
            <person name="Huang D."/>
            <person name="Ong C.K."/>
            <person name="Stephens P."/>
            <person name="Davies H."/>
            <person name="Jones D."/>
            <person name="Lin M.L."/>
            <person name="Teague J."/>
            <person name="Bignell G."/>
            <person name="Butler A."/>
            <person name="Cho J."/>
            <person name="Dalgliesh G.L."/>
            <person name="Galappaththige D."/>
            <person name="Greenman C."/>
            <person name="Hardy C."/>
            <person name="Jia M."/>
            <person name="Latimer C."/>
            <person name="Lau K.W."/>
            <person name="Marshall J."/>
            <person name="McLaren S."/>
            <person name="Menzies A."/>
            <person name="Mudie L."/>
            <person name="Stebbings L."/>
            <person name="Largaespada D.A."/>
            <person name="Wessels L.F.A."/>
            <person name="Richard S."/>
            <person name="Kahnoski R.J."/>
            <person name="Anema J."/>
            <person name="Tuveson D.A."/>
            <person name="Perez-Mancera P.A."/>
            <person name="Mustonen V."/>
            <person name="Fischer A."/>
            <person name="Adams D.J."/>
            <person name="Rust A."/>
            <person name="Chan-On W."/>
            <person name="Subimerb C."/>
            <person name="Dykema K."/>
            <person name="Furge K."/>
            <person name="Campbell P.J."/>
            <person name="Teh B.T."/>
            <person name="Stratton M.R."/>
            <person name="Futreal P.A."/>
        </authorList>
    </citation>
    <scope>VARIANT THR-367</scope>
</reference>
<name>AVR2A_HUMAN</name>
<proteinExistence type="evidence at protein level"/>
<feature type="signal peptide" evidence="3">
    <location>
        <begin position="1"/>
        <end position="19"/>
    </location>
</feature>
<feature type="chain" id="PRO_0000024398" description="Activin receptor type-2A">
    <location>
        <begin position="20"/>
        <end position="513"/>
    </location>
</feature>
<feature type="topological domain" description="Extracellular" evidence="3">
    <location>
        <begin position="20"/>
        <end position="135"/>
    </location>
</feature>
<feature type="transmembrane region" description="Helical" evidence="3">
    <location>
        <begin position="136"/>
        <end position="161"/>
    </location>
</feature>
<feature type="topological domain" description="Cytoplasmic" evidence="3">
    <location>
        <begin position="162"/>
        <end position="513"/>
    </location>
</feature>
<feature type="domain" description="Protein kinase" evidence="4">
    <location>
        <begin position="192"/>
        <end position="485"/>
    </location>
</feature>
<feature type="active site" description="Proton acceptor" evidence="4 5">
    <location>
        <position position="322"/>
    </location>
</feature>
<feature type="binding site" evidence="4">
    <location>
        <begin position="198"/>
        <end position="206"/>
    </location>
    <ligand>
        <name>ATP</name>
        <dbReference type="ChEBI" id="CHEBI:30616"/>
    </ligand>
</feature>
<feature type="binding site" evidence="4">
    <location>
        <position position="219"/>
    </location>
    <ligand>
        <name>ATP</name>
        <dbReference type="ChEBI" id="CHEBI:30616"/>
    </ligand>
</feature>
<feature type="glycosylation site" description="N-linked (GlcNAc...) asparagine" evidence="3">
    <location>
        <position position="43"/>
    </location>
</feature>
<feature type="glycosylation site" description="N-linked (GlcNAc...) asparagine" evidence="3">
    <location>
        <position position="66"/>
    </location>
</feature>
<feature type="disulfide bond" evidence="2">
    <location>
        <begin position="30"/>
        <end position="60"/>
    </location>
</feature>
<feature type="disulfide bond" evidence="2">
    <location>
        <begin position="50"/>
        <end position="78"/>
    </location>
</feature>
<feature type="disulfide bond" evidence="2">
    <location>
        <begin position="85"/>
        <end position="104"/>
    </location>
</feature>
<feature type="disulfide bond" evidence="2">
    <location>
        <begin position="91"/>
        <end position="103"/>
    </location>
</feature>
<feature type="disulfide bond" evidence="2">
    <location>
        <begin position="105"/>
        <end position="110"/>
    </location>
</feature>
<feature type="splice variant" id="VSP_054689" description="In isoform 2." evidence="14">
    <location>
        <begin position="1"/>
        <end position="108"/>
    </location>
</feature>
<feature type="sequence variant" id="VAR_032809" description="In dbSNP:rs34917571." evidence="9">
    <original>S</original>
    <variation>R</variation>
    <location>
        <position position="258"/>
    </location>
</feature>
<feature type="sequence variant" id="VAR_032810" description="In a gastric adenocarcinoma sample; somatic mutation; dbSNP:rs764255410." evidence="9">
    <original>D</original>
    <variation>N</variation>
    <location>
        <position position="306"/>
    </location>
</feature>
<feature type="sequence variant" id="VAR_064692" description="Found in a clear cell renal carcinoma case; somatic mutation." evidence="11">
    <original>A</original>
    <variation>T</variation>
    <location>
        <position position="367"/>
    </location>
</feature>
<feature type="sequence conflict" description="In Ref. 4; BAA06548." evidence="15" ref="4">
    <original>L</original>
    <variation>V</variation>
    <location>
        <position position="13"/>
    </location>
</feature>
<feature type="sequence conflict" description="In Ref. 4; BAA06548." evidence="15" ref="4">
    <original>GCV</original>
    <variation>PSL</variation>
    <location>
        <begin position="204"/>
        <end position="206"/>
    </location>
</feature>
<feature type="sequence conflict" description="In Ref. 4; BAA06548." evidence="15" ref="4">
    <original>E</original>
    <variation>V</variation>
    <location>
        <position position="348"/>
    </location>
</feature>
<feature type="sequence conflict" description="In Ref. 8; AAH67417." evidence="15" ref="8">
    <original>P</original>
    <variation>L</variation>
    <location>
        <position position="507"/>
    </location>
</feature>
<feature type="strand" evidence="19">
    <location>
        <begin position="28"/>
        <end position="34"/>
    </location>
</feature>
<feature type="helix" evidence="19">
    <location>
        <begin position="37"/>
        <end position="40"/>
    </location>
</feature>
<feature type="strand" evidence="19">
    <location>
        <begin position="44"/>
        <end position="49"/>
    </location>
</feature>
<feature type="strand" evidence="19">
    <location>
        <begin position="58"/>
        <end position="67"/>
    </location>
</feature>
<feature type="strand" evidence="19">
    <location>
        <begin position="70"/>
        <end position="80"/>
    </location>
</feature>
<feature type="helix" evidence="20">
    <location>
        <begin position="83"/>
        <end position="85"/>
    </location>
</feature>
<feature type="strand" evidence="19">
    <location>
        <begin position="95"/>
        <end position="97"/>
    </location>
</feature>
<feature type="strand" evidence="19">
    <location>
        <begin position="99"/>
        <end position="105"/>
    </location>
</feature>
<feature type="helix" evidence="19">
    <location>
        <begin position="110"/>
        <end position="112"/>
    </location>
</feature>
<feature type="strand" evidence="18">
    <location>
        <begin position="191"/>
        <end position="199"/>
    </location>
</feature>
<feature type="strand" evidence="18">
    <location>
        <begin position="205"/>
        <end position="211"/>
    </location>
</feature>
<feature type="strand" evidence="18">
    <location>
        <begin position="214"/>
        <end position="221"/>
    </location>
</feature>
<feature type="helix" evidence="18">
    <location>
        <begin position="223"/>
        <end position="225"/>
    </location>
</feature>
<feature type="helix" evidence="18">
    <location>
        <begin position="226"/>
        <end position="236"/>
    </location>
</feature>
<feature type="strand" evidence="18">
    <location>
        <begin position="249"/>
        <end position="256"/>
    </location>
</feature>
<feature type="strand" evidence="18">
    <location>
        <begin position="258"/>
        <end position="268"/>
    </location>
</feature>
<feature type="helix" evidence="18">
    <location>
        <begin position="275"/>
        <end position="281"/>
    </location>
</feature>
<feature type="helix" evidence="18">
    <location>
        <begin position="286"/>
        <end position="303"/>
    </location>
</feature>
<feature type="strand" evidence="18">
    <location>
        <begin position="307"/>
        <end position="310"/>
    </location>
</feature>
<feature type="strand" evidence="18">
    <location>
        <begin position="313"/>
        <end position="315"/>
    </location>
</feature>
<feature type="strand" evidence="18">
    <location>
        <begin position="317"/>
        <end position="319"/>
    </location>
</feature>
<feature type="strand" evidence="18">
    <location>
        <begin position="327"/>
        <end position="330"/>
    </location>
</feature>
<feature type="strand" evidence="18">
    <location>
        <begin position="336"/>
        <end position="338"/>
    </location>
</feature>
<feature type="strand" evidence="18">
    <location>
        <begin position="345"/>
        <end position="347"/>
    </location>
</feature>
<feature type="helix" evidence="18">
    <location>
        <begin position="363"/>
        <end position="365"/>
    </location>
</feature>
<feature type="helix" evidence="18">
    <location>
        <begin position="368"/>
        <end position="371"/>
    </location>
</feature>
<feature type="helix" evidence="18">
    <location>
        <begin position="379"/>
        <end position="398"/>
    </location>
</feature>
<feature type="strand" evidence="18">
    <location>
        <begin position="404"/>
        <end position="406"/>
    </location>
</feature>
<feature type="helix" evidence="18">
    <location>
        <begin position="416"/>
        <end position="419"/>
    </location>
</feature>
<feature type="helix" evidence="18">
    <location>
        <begin position="425"/>
        <end position="432"/>
    </location>
</feature>
<feature type="helix" evidence="18">
    <location>
        <begin position="443"/>
        <end position="446"/>
    </location>
</feature>
<feature type="helix" evidence="18">
    <location>
        <begin position="449"/>
        <end position="461"/>
    </location>
</feature>
<feature type="helix" evidence="18">
    <location>
        <begin position="466"/>
        <end position="468"/>
    </location>
</feature>
<feature type="helix" evidence="18">
    <location>
        <begin position="472"/>
        <end position="485"/>
    </location>
</feature>
<sequence length="513" mass="57848">MGAAAKLAFAVFLISCSSGAILGRSETQECLFFNANWEKDRTNQTGVEPCYGDKDKRRHCFATWKNISGSIEIVKQGCWLDDINCYDRTDCVEKKDSPEVYFCCCEGNMCNEKFSYFPEMEVTQPTSNPVTPKPPYYNILLYSLVPLMLIAGIVICAFWVYRHHKMAYPPVLVPTQDPGPPPPSPLLGLKPLQLLEVKARGRFGCVWKAQLLNEYVAVKIFPIQDKQSWQNEYEVYSLPGMKHENILQFIGAEKRGTSVDVDLWLITAFHEKGSLSDFLKANVVSWNELCHIAETMARGLAYLHEDIPGLKDGHKPAISHRDIKSKNVLLKNNLTACIADFGLALKFEAGKSAGDTHGQVGTRRYMAPEVLEGAINFQRDAFLRIDMYAMGLVLWELASRCTAADGPVDEYMLPFEEEIGQHPSLEDMQEVVVHKKKRPVLRDYWQKHAGMAMLCETIEECWDHDAEARLSAGCVGERITQMQRLTNIITTEDIVTVVTMVTNVDFPPKESSL</sequence>
<organism>
    <name type="scientific">Homo sapiens</name>
    <name type="common">Human</name>
    <dbReference type="NCBI Taxonomy" id="9606"/>
    <lineage>
        <taxon>Eukaryota</taxon>
        <taxon>Metazoa</taxon>
        <taxon>Chordata</taxon>
        <taxon>Craniata</taxon>
        <taxon>Vertebrata</taxon>
        <taxon>Euteleostomi</taxon>
        <taxon>Mammalia</taxon>
        <taxon>Eutheria</taxon>
        <taxon>Euarchontoglires</taxon>
        <taxon>Primates</taxon>
        <taxon>Haplorrhini</taxon>
        <taxon>Catarrhini</taxon>
        <taxon>Hominidae</taxon>
        <taxon>Homo</taxon>
    </lineage>
</organism>
<keyword id="KW-0002">3D-structure</keyword>
<keyword id="KW-0025">Alternative splicing</keyword>
<keyword id="KW-0067">ATP-binding</keyword>
<keyword id="KW-1003">Cell membrane</keyword>
<keyword id="KW-1015">Disulfide bond</keyword>
<keyword id="KW-0325">Glycoprotein</keyword>
<keyword id="KW-0418">Kinase</keyword>
<keyword id="KW-0460">Magnesium</keyword>
<keyword id="KW-0464">Manganese</keyword>
<keyword id="KW-0472">Membrane</keyword>
<keyword id="KW-0479">Metal-binding</keyword>
<keyword id="KW-0547">Nucleotide-binding</keyword>
<keyword id="KW-1267">Proteomics identification</keyword>
<keyword id="KW-0675">Receptor</keyword>
<keyword id="KW-1185">Reference proteome</keyword>
<keyword id="KW-0723">Serine/threonine-protein kinase</keyword>
<keyword id="KW-0732">Signal</keyword>
<keyword id="KW-0808">Transferase</keyword>
<keyword id="KW-0812">Transmembrane</keyword>
<keyword id="KW-1133">Transmembrane helix</keyword>
<comment type="function">
    <text evidence="2 8 10">On ligand binding, forms a receptor complex consisting of two type II and two type I transmembrane serine/threonine kinases. Type II receptors phosphorylate and activate type I receptors which autophosphorylate, then bind and activate SMAD transcriptional regulators. Receptor for activin A, activin B and inhibin A (PubMed:17911401, PubMed:10652306). Mediates induction of adipogenesis by GDF6 (By similarity).</text>
</comment>
<comment type="catalytic activity">
    <reaction evidence="13">
        <text>L-threonyl-[receptor-protein] + ATP = O-phospho-L-threonyl-[receptor-protein] + ADP + H(+)</text>
        <dbReference type="Rhea" id="RHEA:44880"/>
        <dbReference type="Rhea" id="RHEA-COMP:11024"/>
        <dbReference type="Rhea" id="RHEA-COMP:11025"/>
        <dbReference type="ChEBI" id="CHEBI:15378"/>
        <dbReference type="ChEBI" id="CHEBI:30013"/>
        <dbReference type="ChEBI" id="CHEBI:30616"/>
        <dbReference type="ChEBI" id="CHEBI:61977"/>
        <dbReference type="ChEBI" id="CHEBI:456216"/>
        <dbReference type="EC" id="2.7.11.30"/>
    </reaction>
    <physiologicalReaction direction="left-to-right" evidence="13">
        <dbReference type="Rhea" id="RHEA:44881"/>
    </physiologicalReaction>
</comment>
<comment type="catalytic activity">
    <reaction evidence="13">
        <text>L-seryl-[receptor-protein] + ATP = O-phospho-L-seryl-[receptor-protein] + ADP + H(+)</text>
        <dbReference type="Rhea" id="RHEA:18673"/>
        <dbReference type="Rhea" id="RHEA-COMP:11022"/>
        <dbReference type="Rhea" id="RHEA-COMP:11023"/>
        <dbReference type="ChEBI" id="CHEBI:15378"/>
        <dbReference type="ChEBI" id="CHEBI:29999"/>
        <dbReference type="ChEBI" id="CHEBI:30616"/>
        <dbReference type="ChEBI" id="CHEBI:83421"/>
        <dbReference type="ChEBI" id="CHEBI:456216"/>
        <dbReference type="EC" id="2.7.11.30"/>
    </reaction>
    <physiologicalReaction direction="left-to-right" evidence="13">
        <dbReference type="Rhea" id="RHEA:18674"/>
    </physiologicalReaction>
</comment>
<comment type="cofactor">
    <cofactor evidence="1">
        <name>Mg(2+)</name>
        <dbReference type="ChEBI" id="CHEBI:18420"/>
    </cofactor>
    <cofactor evidence="1">
        <name>Mn(2+)</name>
        <dbReference type="ChEBI" id="CHEBI:29035"/>
    </cofactor>
</comment>
<comment type="subunit">
    <text evidence="2 6 7 10 12">Part of a complex consisting of MAGI2/ARIP1, ACVR2A, ACVR1B and SMAD3 (By similarity). Interacts with MAGI2/ARIP1 (By similarity). Interacts with type I receptor ACVR1 (PubMed:17911401). Interacts with BMP7 (PubMed:12667445). Interacts with TSC22D1/TSC-22 (PubMed:21791611). Interacts with activin A/INHBA (PubMed:10652306).</text>
</comment>
<comment type="subcellular location">
    <subcellularLocation>
        <location evidence="2">Cell membrane</location>
        <topology evidence="3">Single-pass type I membrane protein</topology>
    </subcellularLocation>
</comment>
<comment type="alternative products">
    <event type="alternative splicing"/>
    <isoform>
        <id>P27037-1</id>
        <name>1</name>
        <sequence type="displayed"/>
    </isoform>
    <isoform>
        <id>P27037-2</id>
        <name>2</name>
        <sequence type="described" ref="VSP_054689"/>
    </isoform>
</comment>
<comment type="similarity">
    <text evidence="15">Belongs to the protein kinase superfamily. TKL Ser/Thr protein kinase family. TGFB receptor subfamily.</text>
</comment>
<comment type="online information" name="Atlas of Genetics and Cytogenetics in Oncology and Haematology">
    <link uri="https://atlasgeneticsoncology.org/gene/567/ACVR2"/>
</comment>
<gene>
    <name evidence="17" type="primary">ACVR2A</name>
    <name type="synonym">ACVR2</name>
</gene>